<keyword id="KW-0414">Isoprene biosynthesis</keyword>
<keyword id="KW-0460">Magnesium</keyword>
<keyword id="KW-0479">Metal-binding</keyword>
<keyword id="KW-0784">Thiamine biosynthesis</keyword>
<keyword id="KW-0786">Thiamine pyrophosphate</keyword>
<keyword id="KW-0808">Transferase</keyword>
<proteinExistence type="inferred from homology"/>
<gene>
    <name evidence="1" type="primary">dxs</name>
    <name type="ordered locus">NT01EI_1061</name>
</gene>
<comment type="function">
    <text evidence="1">Catalyzes the acyloin condensation reaction between C atoms 2 and 3 of pyruvate and glyceraldehyde 3-phosphate to yield 1-deoxy-D-xylulose-5-phosphate (DXP).</text>
</comment>
<comment type="catalytic activity">
    <reaction evidence="1">
        <text>D-glyceraldehyde 3-phosphate + pyruvate + H(+) = 1-deoxy-D-xylulose 5-phosphate + CO2</text>
        <dbReference type="Rhea" id="RHEA:12605"/>
        <dbReference type="ChEBI" id="CHEBI:15361"/>
        <dbReference type="ChEBI" id="CHEBI:15378"/>
        <dbReference type="ChEBI" id="CHEBI:16526"/>
        <dbReference type="ChEBI" id="CHEBI:57792"/>
        <dbReference type="ChEBI" id="CHEBI:59776"/>
        <dbReference type="EC" id="2.2.1.7"/>
    </reaction>
</comment>
<comment type="cofactor">
    <cofactor evidence="1">
        <name>Mg(2+)</name>
        <dbReference type="ChEBI" id="CHEBI:18420"/>
    </cofactor>
    <text evidence="1">Binds 1 Mg(2+) ion per subunit.</text>
</comment>
<comment type="cofactor">
    <cofactor evidence="1">
        <name>thiamine diphosphate</name>
        <dbReference type="ChEBI" id="CHEBI:58937"/>
    </cofactor>
    <text evidence="1">Binds 1 thiamine pyrophosphate per subunit.</text>
</comment>
<comment type="pathway">
    <text evidence="1">Metabolic intermediate biosynthesis; 1-deoxy-D-xylulose 5-phosphate biosynthesis; 1-deoxy-D-xylulose 5-phosphate from D-glyceraldehyde 3-phosphate and pyruvate: step 1/1.</text>
</comment>
<comment type="subunit">
    <text evidence="1">Homodimer.</text>
</comment>
<comment type="similarity">
    <text evidence="1">Belongs to the transketolase family. DXPS subfamily.</text>
</comment>
<accession>C5BCH9</accession>
<dbReference type="EC" id="2.2.1.7" evidence="1"/>
<dbReference type="EMBL" id="CP001600">
    <property type="protein sequence ID" value="ACR68273.1"/>
    <property type="molecule type" value="Genomic_DNA"/>
</dbReference>
<dbReference type="RefSeq" id="WP_015870454.1">
    <property type="nucleotide sequence ID" value="NZ_CP169062.1"/>
</dbReference>
<dbReference type="SMR" id="C5BCH9"/>
<dbReference type="STRING" id="67780.B6E78_15675"/>
<dbReference type="GeneID" id="69538095"/>
<dbReference type="KEGG" id="eic:NT01EI_1061"/>
<dbReference type="PATRIC" id="fig|634503.3.peg.961"/>
<dbReference type="HOGENOM" id="CLU_009227_1_4_6"/>
<dbReference type="OrthoDB" id="9803371at2"/>
<dbReference type="UniPathway" id="UPA00064">
    <property type="reaction ID" value="UER00091"/>
</dbReference>
<dbReference type="Proteomes" id="UP000001485">
    <property type="component" value="Chromosome"/>
</dbReference>
<dbReference type="GO" id="GO:0005829">
    <property type="term" value="C:cytosol"/>
    <property type="evidence" value="ECO:0007669"/>
    <property type="project" value="TreeGrafter"/>
</dbReference>
<dbReference type="GO" id="GO:0008661">
    <property type="term" value="F:1-deoxy-D-xylulose-5-phosphate synthase activity"/>
    <property type="evidence" value="ECO:0007669"/>
    <property type="project" value="UniProtKB-UniRule"/>
</dbReference>
<dbReference type="GO" id="GO:0000287">
    <property type="term" value="F:magnesium ion binding"/>
    <property type="evidence" value="ECO:0007669"/>
    <property type="project" value="UniProtKB-UniRule"/>
</dbReference>
<dbReference type="GO" id="GO:0030976">
    <property type="term" value="F:thiamine pyrophosphate binding"/>
    <property type="evidence" value="ECO:0007669"/>
    <property type="project" value="UniProtKB-UniRule"/>
</dbReference>
<dbReference type="GO" id="GO:0052865">
    <property type="term" value="P:1-deoxy-D-xylulose 5-phosphate biosynthetic process"/>
    <property type="evidence" value="ECO:0007669"/>
    <property type="project" value="UniProtKB-UniPathway"/>
</dbReference>
<dbReference type="GO" id="GO:0019288">
    <property type="term" value="P:isopentenyl diphosphate biosynthetic process, methylerythritol 4-phosphate pathway"/>
    <property type="evidence" value="ECO:0007669"/>
    <property type="project" value="TreeGrafter"/>
</dbReference>
<dbReference type="GO" id="GO:0016114">
    <property type="term" value="P:terpenoid biosynthetic process"/>
    <property type="evidence" value="ECO:0007669"/>
    <property type="project" value="UniProtKB-UniRule"/>
</dbReference>
<dbReference type="GO" id="GO:0009228">
    <property type="term" value="P:thiamine biosynthetic process"/>
    <property type="evidence" value="ECO:0007669"/>
    <property type="project" value="UniProtKB-UniRule"/>
</dbReference>
<dbReference type="CDD" id="cd02007">
    <property type="entry name" value="TPP_DXS"/>
    <property type="match status" value="1"/>
</dbReference>
<dbReference type="CDD" id="cd07033">
    <property type="entry name" value="TPP_PYR_DXS_TK_like"/>
    <property type="match status" value="1"/>
</dbReference>
<dbReference type="FunFam" id="3.40.50.920:FF:000002">
    <property type="entry name" value="1-deoxy-D-xylulose-5-phosphate synthase"/>
    <property type="match status" value="1"/>
</dbReference>
<dbReference type="FunFam" id="3.40.50.970:FF:000005">
    <property type="entry name" value="1-deoxy-D-xylulose-5-phosphate synthase"/>
    <property type="match status" value="1"/>
</dbReference>
<dbReference type="Gene3D" id="3.40.50.920">
    <property type="match status" value="1"/>
</dbReference>
<dbReference type="Gene3D" id="3.40.50.970">
    <property type="match status" value="2"/>
</dbReference>
<dbReference type="HAMAP" id="MF_00315">
    <property type="entry name" value="DXP_synth"/>
    <property type="match status" value="1"/>
</dbReference>
<dbReference type="InterPro" id="IPR005477">
    <property type="entry name" value="Dxylulose-5-P_synthase"/>
</dbReference>
<dbReference type="InterPro" id="IPR029061">
    <property type="entry name" value="THDP-binding"/>
</dbReference>
<dbReference type="InterPro" id="IPR009014">
    <property type="entry name" value="Transketo_C/PFOR_II"/>
</dbReference>
<dbReference type="InterPro" id="IPR005475">
    <property type="entry name" value="Transketolase-like_Pyr-bd"/>
</dbReference>
<dbReference type="InterPro" id="IPR020826">
    <property type="entry name" value="Transketolase_BS"/>
</dbReference>
<dbReference type="InterPro" id="IPR033248">
    <property type="entry name" value="Transketolase_C"/>
</dbReference>
<dbReference type="InterPro" id="IPR049557">
    <property type="entry name" value="Transketolase_CS"/>
</dbReference>
<dbReference type="NCBIfam" id="TIGR00204">
    <property type="entry name" value="dxs"/>
    <property type="match status" value="1"/>
</dbReference>
<dbReference type="NCBIfam" id="NF003933">
    <property type="entry name" value="PRK05444.2-2"/>
    <property type="match status" value="1"/>
</dbReference>
<dbReference type="PANTHER" id="PTHR43322">
    <property type="entry name" value="1-D-DEOXYXYLULOSE 5-PHOSPHATE SYNTHASE-RELATED"/>
    <property type="match status" value="1"/>
</dbReference>
<dbReference type="PANTHER" id="PTHR43322:SF5">
    <property type="entry name" value="1-DEOXY-D-XYLULOSE-5-PHOSPHATE SYNTHASE, CHLOROPLASTIC"/>
    <property type="match status" value="1"/>
</dbReference>
<dbReference type="Pfam" id="PF13292">
    <property type="entry name" value="DXP_synthase_N"/>
    <property type="match status" value="1"/>
</dbReference>
<dbReference type="Pfam" id="PF02779">
    <property type="entry name" value="Transket_pyr"/>
    <property type="match status" value="1"/>
</dbReference>
<dbReference type="Pfam" id="PF02780">
    <property type="entry name" value="Transketolase_C"/>
    <property type="match status" value="1"/>
</dbReference>
<dbReference type="SMART" id="SM00861">
    <property type="entry name" value="Transket_pyr"/>
    <property type="match status" value="1"/>
</dbReference>
<dbReference type="SUPFAM" id="SSF52518">
    <property type="entry name" value="Thiamin diphosphate-binding fold (THDP-binding)"/>
    <property type="match status" value="2"/>
</dbReference>
<dbReference type="SUPFAM" id="SSF52922">
    <property type="entry name" value="TK C-terminal domain-like"/>
    <property type="match status" value="1"/>
</dbReference>
<dbReference type="PROSITE" id="PS00801">
    <property type="entry name" value="TRANSKETOLASE_1"/>
    <property type="match status" value="1"/>
</dbReference>
<dbReference type="PROSITE" id="PS00802">
    <property type="entry name" value="TRANSKETOLASE_2"/>
    <property type="match status" value="1"/>
</dbReference>
<feature type="chain" id="PRO_1000205068" description="1-deoxy-D-xylulose-5-phosphate synthase">
    <location>
        <begin position="1"/>
        <end position="621"/>
    </location>
</feature>
<feature type="binding site" evidence="1">
    <location>
        <position position="80"/>
    </location>
    <ligand>
        <name>thiamine diphosphate</name>
        <dbReference type="ChEBI" id="CHEBI:58937"/>
    </ligand>
</feature>
<feature type="binding site" evidence="1">
    <location>
        <begin position="121"/>
        <end position="123"/>
    </location>
    <ligand>
        <name>thiamine diphosphate</name>
        <dbReference type="ChEBI" id="CHEBI:58937"/>
    </ligand>
</feature>
<feature type="binding site" evidence="1">
    <location>
        <position position="152"/>
    </location>
    <ligand>
        <name>Mg(2+)</name>
        <dbReference type="ChEBI" id="CHEBI:18420"/>
    </ligand>
</feature>
<feature type="binding site" evidence="1">
    <location>
        <begin position="153"/>
        <end position="154"/>
    </location>
    <ligand>
        <name>thiamine diphosphate</name>
        <dbReference type="ChEBI" id="CHEBI:58937"/>
    </ligand>
</feature>
<feature type="binding site" evidence="1">
    <location>
        <position position="181"/>
    </location>
    <ligand>
        <name>Mg(2+)</name>
        <dbReference type="ChEBI" id="CHEBI:18420"/>
    </ligand>
</feature>
<feature type="binding site" evidence="1">
    <location>
        <position position="181"/>
    </location>
    <ligand>
        <name>thiamine diphosphate</name>
        <dbReference type="ChEBI" id="CHEBI:58937"/>
    </ligand>
</feature>
<feature type="binding site" evidence="1">
    <location>
        <position position="288"/>
    </location>
    <ligand>
        <name>thiamine diphosphate</name>
        <dbReference type="ChEBI" id="CHEBI:58937"/>
    </ligand>
</feature>
<feature type="binding site" evidence="1">
    <location>
        <position position="370"/>
    </location>
    <ligand>
        <name>thiamine diphosphate</name>
        <dbReference type="ChEBI" id="CHEBI:58937"/>
    </ligand>
</feature>
<organism>
    <name type="scientific">Edwardsiella ictaluri (strain 93-146)</name>
    <dbReference type="NCBI Taxonomy" id="634503"/>
    <lineage>
        <taxon>Bacteria</taxon>
        <taxon>Pseudomonadati</taxon>
        <taxon>Pseudomonadota</taxon>
        <taxon>Gammaproteobacteria</taxon>
        <taxon>Enterobacterales</taxon>
        <taxon>Hafniaceae</taxon>
        <taxon>Edwardsiella</taxon>
    </lineage>
</organism>
<name>DXS_EDWI9</name>
<evidence type="ECO:0000255" key="1">
    <source>
        <dbReference type="HAMAP-Rule" id="MF_00315"/>
    </source>
</evidence>
<sequence>MSFDIAKYPTLALVPDPDDLRLLPKESLPTLCDELRQYLLNSVSRSSGHFASGLGAVELTVALHYVYQTPFDSLIWDVGHQAYPHKILTGRRDRIATIRQKGGLHPFPWRDESEYDTLSVGHSSTSISAGLGMAVAAEREGLGRRTVCVIGDGAMTAGMAFEAMNHAGDIKADMLVVLNDNEMSISENVGALNNHLAQLLSGKLYASLREGGKKMLSGLPPIKELVKRTEEHLKGMVVPGTLFEELGFNYIGPVDGHDVQALVATLKNMRDLKGPQLLHIMTKKGKGYAPAEKDPISWHAVPKFDPASGTLPKSSGTLPTYSKIFGDWLCETAHNDDRLMGITPAMREGSGMVRFSREYPQQYFDVAIAEQHAVTFGAGLAIGGYHPVVAIYSSFLQRAYDQVIHDVAIQRLPVLFAIDRGGIVGADGQTHQGAFDLSFLRCIPNLVIMTPSDENECRQMLQTGYEYREGPSAVRYPRGTGTGAPLTPPQALPIGKGVLRRRGERIAILNFGSLLPQALEAAERLNASVADMRFVKPLDDALVRSLAEQHEYLVTLEENAVMGGAGSGVNELLMQLRLPRPVLNIGLQDSFVPQGSQEEIRRDLQLDADGILAQLEGWLAR</sequence>
<protein>
    <recommendedName>
        <fullName evidence="1">1-deoxy-D-xylulose-5-phosphate synthase</fullName>
        <ecNumber evidence="1">2.2.1.7</ecNumber>
    </recommendedName>
    <alternativeName>
        <fullName evidence="1">1-deoxyxylulose-5-phosphate synthase</fullName>
        <shortName evidence="1">DXP synthase</shortName>
        <shortName evidence="1">DXPS</shortName>
    </alternativeName>
</protein>
<reference key="1">
    <citation type="submission" date="2009-03" db="EMBL/GenBank/DDBJ databases">
        <title>Complete genome sequence of Edwardsiella ictaluri 93-146.</title>
        <authorList>
            <person name="Williams M.L."/>
            <person name="Gillaspy A.F."/>
            <person name="Dyer D.W."/>
            <person name="Thune R.L."/>
            <person name="Waldbieser G.C."/>
            <person name="Schuster S.C."/>
            <person name="Gipson J."/>
            <person name="Zaitshik J."/>
            <person name="Landry C."/>
            <person name="Lawrence M.L."/>
        </authorList>
    </citation>
    <scope>NUCLEOTIDE SEQUENCE [LARGE SCALE GENOMIC DNA]</scope>
    <source>
        <strain>93-146</strain>
    </source>
</reference>